<feature type="signal peptide" evidence="1">
    <location>
        <begin position="1"/>
        <end position="20"/>
    </location>
</feature>
<feature type="chain" id="PRO_0000042803" description="Chaperone SurA">
    <location>
        <begin position="21"/>
        <end position="428"/>
    </location>
</feature>
<feature type="domain" description="PpiC 1" evidence="1">
    <location>
        <begin position="171"/>
        <end position="272"/>
    </location>
</feature>
<feature type="domain" description="PpiC 2" evidence="1">
    <location>
        <begin position="282"/>
        <end position="382"/>
    </location>
</feature>
<comment type="function">
    <text evidence="1">Chaperone involved in the correct folding and assembly of outer membrane proteins. Recognizes specific patterns of aromatic residues and the orientation of their side chains, which are found more frequently in integral outer membrane proteins. May act in both early periplasmic and late outer membrane-associated steps of protein maturation.</text>
</comment>
<comment type="catalytic activity">
    <reaction evidence="1">
        <text>[protein]-peptidylproline (omega=180) = [protein]-peptidylproline (omega=0)</text>
        <dbReference type="Rhea" id="RHEA:16237"/>
        <dbReference type="Rhea" id="RHEA-COMP:10747"/>
        <dbReference type="Rhea" id="RHEA-COMP:10748"/>
        <dbReference type="ChEBI" id="CHEBI:83833"/>
        <dbReference type="ChEBI" id="CHEBI:83834"/>
        <dbReference type="EC" id="5.2.1.8"/>
    </reaction>
</comment>
<comment type="subcellular location">
    <subcellularLocation>
        <location evidence="1">Periplasm</location>
    </subcellularLocation>
    <text evidence="1">Is capable of associating with the outer membrane.</text>
</comment>
<comment type="domain">
    <text evidence="1">The PPIase activity resides only in the second parvulin domain. The N-terminal region and the C-terminal tail are necessary and sufficient for the chaperone activity of SurA. The PPIase activity is dispensable for SurA to function as a chaperone. The N-terminal region and the C-terminal tail are also required for porin recognition.</text>
</comment>
<keyword id="KW-0143">Chaperone</keyword>
<keyword id="KW-0413">Isomerase</keyword>
<keyword id="KW-0574">Periplasm</keyword>
<keyword id="KW-1185">Reference proteome</keyword>
<keyword id="KW-0677">Repeat</keyword>
<keyword id="KW-0697">Rotamase</keyword>
<keyword id="KW-0732">Signal</keyword>
<reference key="1">
    <citation type="journal article" date="2002" name="Proc. Natl. Acad. Sci. U.S.A.">
        <title>Extensive mosaic structure revealed by the complete genome sequence of uropathogenic Escherichia coli.</title>
        <authorList>
            <person name="Welch R.A."/>
            <person name="Burland V."/>
            <person name="Plunkett G. III"/>
            <person name="Redford P."/>
            <person name="Roesch P."/>
            <person name="Rasko D."/>
            <person name="Buckles E.L."/>
            <person name="Liou S.-R."/>
            <person name="Boutin A."/>
            <person name="Hackett J."/>
            <person name="Stroud D."/>
            <person name="Mayhew G.F."/>
            <person name="Rose D.J."/>
            <person name="Zhou S."/>
            <person name="Schwartz D.C."/>
            <person name="Perna N.T."/>
            <person name="Mobley H.L.T."/>
            <person name="Donnenberg M.S."/>
            <person name="Blattner F.R."/>
        </authorList>
    </citation>
    <scope>NUCLEOTIDE SEQUENCE [LARGE SCALE GENOMIC DNA]</scope>
    <source>
        <strain>CFT073 / ATCC 700928 / UPEC</strain>
    </source>
</reference>
<sequence length="428" mass="47284">MKNWKTLLLGIAMIANTSFAAPQVVDKVAAVVNNGVVLESDVDGLMQSVKLNAAQARQQLPDDATLRHQIMERLIMDQIILQMGQKMGVKISDEQLDQAIANIAKQNNMTLDQMRSRLAYDGLNYNTYRNQIRKEMIISEVRNNEVRRRITILPQEVESLAQQVGNQNDASTELNLSHILIPLPENPTSDQVNEAESQARAIVDQARNGADFGKLAIAHSADQQALNGGQMGWGRIQELPGIFAQALSTAKKGDIVGPIRSGVGFHILKVNDLRGESKNISVTEVHARHILLKPSPIMTDEQARVKLEQIAADIKSGKTTFAAAAKEFSQDPGSANQGGDLGWATPDIFDPAFRDALTRLNKGQMSAPVHSSFGWHLIELLDTRNVDKTDAAQKDRAYRMLMNRKFSEEAASWMQEQRASAYVKILSN</sequence>
<gene>
    <name evidence="1" type="primary">surA</name>
    <name type="ordered locus">c0066</name>
</gene>
<organism>
    <name type="scientific">Escherichia coli O6:H1 (strain CFT073 / ATCC 700928 / UPEC)</name>
    <dbReference type="NCBI Taxonomy" id="199310"/>
    <lineage>
        <taxon>Bacteria</taxon>
        <taxon>Pseudomonadati</taxon>
        <taxon>Pseudomonadota</taxon>
        <taxon>Gammaproteobacteria</taxon>
        <taxon>Enterobacterales</taxon>
        <taxon>Enterobacteriaceae</taxon>
        <taxon>Escherichia</taxon>
    </lineage>
</organism>
<accession>P0ABZ7</accession>
<accession>P21202</accession>
<accession>P75630</accession>
<accession>Q8KIP6</accession>
<accession>Q8KMY0</accession>
<proteinExistence type="inferred from homology"/>
<dbReference type="EC" id="5.2.1.8" evidence="1"/>
<dbReference type="EMBL" id="AE014075">
    <property type="protein sequence ID" value="AAN78562.1"/>
    <property type="molecule type" value="Genomic_DNA"/>
</dbReference>
<dbReference type="RefSeq" id="WP_000800457.1">
    <property type="nucleotide sequence ID" value="NZ_CP051263.1"/>
</dbReference>
<dbReference type="SMR" id="P0ABZ7"/>
<dbReference type="STRING" id="199310.c0066"/>
<dbReference type="GeneID" id="93777382"/>
<dbReference type="KEGG" id="ecc:c0066"/>
<dbReference type="eggNOG" id="COG0760">
    <property type="taxonomic scope" value="Bacteria"/>
</dbReference>
<dbReference type="HOGENOM" id="CLU_034646_11_0_6"/>
<dbReference type="BioCyc" id="ECOL199310:C0066-MONOMER"/>
<dbReference type="Proteomes" id="UP000001410">
    <property type="component" value="Chromosome"/>
</dbReference>
<dbReference type="GO" id="GO:0030288">
    <property type="term" value="C:outer membrane-bounded periplasmic space"/>
    <property type="evidence" value="ECO:0007669"/>
    <property type="project" value="InterPro"/>
</dbReference>
<dbReference type="GO" id="GO:0042277">
    <property type="term" value="F:peptide binding"/>
    <property type="evidence" value="ECO:0007669"/>
    <property type="project" value="InterPro"/>
</dbReference>
<dbReference type="GO" id="GO:0003755">
    <property type="term" value="F:peptidyl-prolyl cis-trans isomerase activity"/>
    <property type="evidence" value="ECO:0007669"/>
    <property type="project" value="UniProtKB-UniRule"/>
</dbReference>
<dbReference type="GO" id="GO:0051082">
    <property type="term" value="F:unfolded protein binding"/>
    <property type="evidence" value="ECO:0007669"/>
    <property type="project" value="UniProtKB-UniRule"/>
</dbReference>
<dbReference type="GO" id="GO:0043165">
    <property type="term" value="P:Gram-negative-bacterium-type cell outer membrane assembly"/>
    <property type="evidence" value="ECO:0007669"/>
    <property type="project" value="InterPro"/>
</dbReference>
<dbReference type="GO" id="GO:0006457">
    <property type="term" value="P:protein folding"/>
    <property type="evidence" value="ECO:0007669"/>
    <property type="project" value="UniProtKB-UniRule"/>
</dbReference>
<dbReference type="GO" id="GO:0050821">
    <property type="term" value="P:protein stabilization"/>
    <property type="evidence" value="ECO:0007669"/>
    <property type="project" value="InterPro"/>
</dbReference>
<dbReference type="FunFam" id="1.10.4030.10:FF:000002">
    <property type="entry name" value="Chaperone SurA"/>
    <property type="match status" value="1"/>
</dbReference>
<dbReference type="FunFam" id="3.10.50.40:FF:000007">
    <property type="entry name" value="Chaperone SurA"/>
    <property type="match status" value="1"/>
</dbReference>
<dbReference type="Gene3D" id="3.10.50.40">
    <property type="match status" value="2"/>
</dbReference>
<dbReference type="Gene3D" id="1.10.4030.10">
    <property type="entry name" value="Porin chaperone SurA, peptide-binding domain"/>
    <property type="match status" value="2"/>
</dbReference>
<dbReference type="HAMAP" id="MF_01183">
    <property type="entry name" value="Chaperone_SurA"/>
    <property type="match status" value="1"/>
</dbReference>
<dbReference type="InterPro" id="IPR050280">
    <property type="entry name" value="OMP_Chaperone_SurA"/>
</dbReference>
<dbReference type="InterPro" id="IPR046357">
    <property type="entry name" value="PPIase_dom_sf"/>
</dbReference>
<dbReference type="InterPro" id="IPR000297">
    <property type="entry name" value="PPIase_PpiC"/>
</dbReference>
<dbReference type="InterPro" id="IPR023058">
    <property type="entry name" value="PPIase_PpiC_CS"/>
</dbReference>
<dbReference type="InterPro" id="IPR023034">
    <property type="entry name" value="PPIase_SurA"/>
</dbReference>
<dbReference type="InterPro" id="IPR015391">
    <property type="entry name" value="SurA_N"/>
</dbReference>
<dbReference type="InterPro" id="IPR027304">
    <property type="entry name" value="Trigger_fact/SurA_dom_sf"/>
</dbReference>
<dbReference type="NCBIfam" id="NF008038">
    <property type="entry name" value="PRK10770.1"/>
    <property type="match status" value="1"/>
</dbReference>
<dbReference type="PANTHER" id="PTHR47637">
    <property type="entry name" value="CHAPERONE SURA"/>
    <property type="match status" value="1"/>
</dbReference>
<dbReference type="PANTHER" id="PTHR47637:SF1">
    <property type="entry name" value="CHAPERONE SURA"/>
    <property type="match status" value="1"/>
</dbReference>
<dbReference type="Pfam" id="PF00639">
    <property type="entry name" value="Rotamase"/>
    <property type="match status" value="1"/>
</dbReference>
<dbReference type="Pfam" id="PF13616">
    <property type="entry name" value="Rotamase_3"/>
    <property type="match status" value="1"/>
</dbReference>
<dbReference type="Pfam" id="PF09312">
    <property type="entry name" value="SurA_N"/>
    <property type="match status" value="1"/>
</dbReference>
<dbReference type="SUPFAM" id="SSF54534">
    <property type="entry name" value="FKBP-like"/>
    <property type="match status" value="2"/>
</dbReference>
<dbReference type="SUPFAM" id="SSF109998">
    <property type="entry name" value="Triger factor/SurA peptide-binding domain-like"/>
    <property type="match status" value="1"/>
</dbReference>
<dbReference type="PROSITE" id="PS01096">
    <property type="entry name" value="PPIC_PPIASE_1"/>
    <property type="match status" value="2"/>
</dbReference>
<dbReference type="PROSITE" id="PS50198">
    <property type="entry name" value="PPIC_PPIASE_2"/>
    <property type="match status" value="2"/>
</dbReference>
<evidence type="ECO:0000255" key="1">
    <source>
        <dbReference type="HAMAP-Rule" id="MF_01183"/>
    </source>
</evidence>
<name>SURA_ECOL6</name>
<protein>
    <recommendedName>
        <fullName evidence="1">Chaperone SurA</fullName>
    </recommendedName>
    <alternativeName>
        <fullName evidence="1">Peptidyl-prolyl cis-trans isomerase SurA</fullName>
        <shortName evidence="1">PPIase SurA</shortName>
        <ecNumber evidence="1">5.2.1.8</ecNumber>
    </alternativeName>
    <alternativeName>
        <fullName evidence="1">Rotamase SurA</fullName>
    </alternativeName>
</protein>